<protein>
    <recommendedName>
        <fullName evidence="3">Periviscerokinin-3</fullName>
        <shortName evidence="3">EllSp-PVK-3</shortName>
    </recommendedName>
</protein>
<name>PVK3_ELLSS</name>
<organism>
    <name type="scientific">Elliptorhina sp. (strain SR-2005)</name>
    <name type="common">Hisser roach</name>
    <dbReference type="NCBI Taxonomy" id="348767"/>
    <lineage>
        <taxon>Eukaryota</taxon>
        <taxon>Metazoa</taxon>
        <taxon>Ecdysozoa</taxon>
        <taxon>Arthropoda</taxon>
        <taxon>Hexapoda</taxon>
        <taxon>Insecta</taxon>
        <taxon>Pterygota</taxon>
        <taxon>Neoptera</taxon>
        <taxon>Polyneoptera</taxon>
        <taxon>Dictyoptera</taxon>
        <taxon>Blattodea</taxon>
        <taxon>Blaberoidea</taxon>
        <taxon>Blaberidae</taxon>
        <taxon>Oxyhaloinae</taxon>
        <taxon>Elliptorhina</taxon>
    </lineage>
</organism>
<dbReference type="GO" id="GO:0005576">
    <property type="term" value="C:extracellular region"/>
    <property type="evidence" value="ECO:0007669"/>
    <property type="project" value="UniProtKB-SubCell"/>
</dbReference>
<dbReference type="GO" id="GO:0007218">
    <property type="term" value="P:neuropeptide signaling pathway"/>
    <property type="evidence" value="ECO:0007669"/>
    <property type="project" value="UniProtKB-KW"/>
</dbReference>
<dbReference type="InterPro" id="IPR013231">
    <property type="entry name" value="Periviscerokinin"/>
</dbReference>
<dbReference type="Pfam" id="PF08259">
    <property type="entry name" value="Periviscerokin"/>
    <property type="match status" value="1"/>
</dbReference>
<comment type="function">
    <text evidence="4">Mediates visceral muscle contractile activity (myotropic activity).</text>
</comment>
<comment type="subcellular location">
    <subcellularLocation>
        <location evidence="4">Secreted</location>
    </subcellularLocation>
</comment>
<comment type="similarity">
    <text evidence="1">Belongs to the periviscerokinin family.</text>
</comment>
<reference evidence="4" key="1">
    <citation type="journal article" date="2009" name="BMC Evol. Biol.">
        <title>A proteomic approach for studying insect phylogeny: CAPA peptides of ancient insect taxa (Dictyoptera, Blattoptera) as a test case.</title>
        <authorList>
            <person name="Roth S."/>
            <person name="Fromm B."/>
            <person name="Gaede G."/>
            <person name="Predel R."/>
        </authorList>
    </citation>
    <scope>PROTEIN SEQUENCE</scope>
    <scope>AMIDATION AT VAL-11</scope>
    <source>
        <tissue evidence="2">Abdominal perisympathetic organs</tissue>
    </source>
</reference>
<sequence length="11" mass="1147">GSSGMIPFPRV</sequence>
<accession>P85606</accession>
<proteinExistence type="evidence at protein level"/>
<keyword id="KW-0027">Amidation</keyword>
<keyword id="KW-0903">Direct protein sequencing</keyword>
<keyword id="KW-0527">Neuropeptide</keyword>
<keyword id="KW-0964">Secreted</keyword>
<feature type="peptide" id="PRO_0000378828" description="Periviscerokinin-3" evidence="2">
    <location>
        <begin position="1"/>
        <end position="11"/>
    </location>
</feature>
<feature type="modified residue" description="Valine amide" evidence="2">
    <location>
        <position position="11"/>
    </location>
</feature>
<evidence type="ECO:0000255" key="1"/>
<evidence type="ECO:0000269" key="2">
    <source>
    </source>
</evidence>
<evidence type="ECO:0000303" key="3">
    <source>
    </source>
</evidence>
<evidence type="ECO:0000305" key="4"/>